<name>1433_FUCVE</name>
<accession>Q39757</accession>
<reference key="1">
    <citation type="submission" date="1996-06" db="EMBL/GenBank/DDBJ databases">
        <authorList>
            <person name="Nicolaus B.H.H."/>
        </authorList>
    </citation>
    <scope>NUCLEOTIDE SEQUENCE [MRNA]</scope>
    <source>
        <tissue>Frond tip</tissue>
    </source>
</reference>
<dbReference type="EMBL" id="X98886">
    <property type="protein sequence ID" value="CAA67389.1"/>
    <property type="molecule type" value="mRNA"/>
</dbReference>
<dbReference type="SMR" id="Q39757"/>
<dbReference type="FunFam" id="1.20.190.20:FF:000001">
    <property type="entry name" value="14-3-3 gamma 1"/>
    <property type="match status" value="1"/>
</dbReference>
<dbReference type="Gene3D" id="1.20.190.20">
    <property type="entry name" value="14-3-3 domain"/>
    <property type="match status" value="1"/>
</dbReference>
<dbReference type="InterPro" id="IPR000308">
    <property type="entry name" value="14-3-3"/>
</dbReference>
<dbReference type="InterPro" id="IPR023409">
    <property type="entry name" value="14-3-3_CS"/>
</dbReference>
<dbReference type="InterPro" id="IPR036815">
    <property type="entry name" value="14-3-3_dom_sf"/>
</dbReference>
<dbReference type="InterPro" id="IPR023410">
    <property type="entry name" value="14-3-3_domain"/>
</dbReference>
<dbReference type="PANTHER" id="PTHR18860">
    <property type="entry name" value="14-3-3 PROTEIN"/>
    <property type="match status" value="1"/>
</dbReference>
<dbReference type="Pfam" id="PF00244">
    <property type="entry name" value="14-3-3"/>
    <property type="match status" value="1"/>
</dbReference>
<dbReference type="PIRSF" id="PIRSF000868">
    <property type="entry name" value="14-3-3"/>
    <property type="match status" value="1"/>
</dbReference>
<dbReference type="PRINTS" id="PR00305">
    <property type="entry name" value="1433ZETA"/>
</dbReference>
<dbReference type="SMART" id="SM00101">
    <property type="entry name" value="14_3_3"/>
    <property type="match status" value="1"/>
</dbReference>
<dbReference type="SUPFAM" id="SSF48445">
    <property type="entry name" value="14-3-3 protein"/>
    <property type="match status" value="1"/>
</dbReference>
<dbReference type="PROSITE" id="PS00796">
    <property type="entry name" value="1433_1"/>
    <property type="match status" value="1"/>
</dbReference>
<evidence type="ECO:0000305" key="1"/>
<protein>
    <recommendedName>
        <fullName>14-3-3-like protein</fullName>
    </recommendedName>
</protein>
<proteinExistence type="evidence at transcript level"/>
<feature type="chain" id="PRO_0000058676" description="14-3-3-like protein">
    <location>
        <begin position="1"/>
        <end position="251"/>
    </location>
</feature>
<sequence>MASRDDLVYMAKLAEQAERFDEMVDHMKAVAQQPKELSVEERNLLSVAYKNVIGSRRASWRVISSIEGKDTVSDQLPLIRDYKSKIETELTDICADILKIIEAELIPNSTSEEGKVFYYKMKGDYHRYLAEFQSADERKTSASDALDAYQLASDHANQDLPPTHPIRLGLALNFSVFYYEILNSPDRACGLAKAAFDDAIAELDTLSEESYKDSTLIIMQLLRDNLTLWTSDQGEAEEAPGNADGTVVEDL</sequence>
<organism>
    <name type="scientific">Fucus vesiculosus</name>
    <name type="common">Bladder wrack</name>
    <dbReference type="NCBI Taxonomy" id="49266"/>
    <lineage>
        <taxon>Eukaryota</taxon>
        <taxon>Sar</taxon>
        <taxon>Stramenopiles</taxon>
        <taxon>Ochrophyta</taxon>
        <taxon>PX clade</taxon>
        <taxon>Phaeophyceae</taxon>
        <taxon>Fucales</taxon>
        <taxon>Fucaceae</taxon>
        <taxon>Fucus</taxon>
    </lineage>
</organism>
<comment type="similarity">
    <text evidence="1">Belongs to the 14-3-3 family.</text>
</comment>